<evidence type="ECO:0000255" key="1">
    <source>
        <dbReference type="HAMAP-Rule" id="MF_00012"/>
    </source>
</evidence>
<feature type="chain" id="PRO_0000103524" description="Dihydroxy-acid dehydratase">
    <location>
        <begin position="1"/>
        <end position="569"/>
    </location>
</feature>
<feature type="active site" description="Proton acceptor" evidence="1">
    <location>
        <position position="488"/>
    </location>
</feature>
<feature type="binding site" evidence="1">
    <location>
        <position position="61"/>
    </location>
    <ligand>
        <name>[2Fe-2S] cluster</name>
        <dbReference type="ChEBI" id="CHEBI:190135"/>
    </ligand>
</feature>
<feature type="binding site" evidence="1">
    <location>
        <position position="93"/>
    </location>
    <ligand>
        <name>Mg(2+)</name>
        <dbReference type="ChEBI" id="CHEBI:18420"/>
    </ligand>
</feature>
<feature type="binding site" evidence="1">
    <location>
        <position position="134"/>
    </location>
    <ligand>
        <name>[2Fe-2S] cluster</name>
        <dbReference type="ChEBI" id="CHEBI:190135"/>
    </ligand>
</feature>
<feature type="binding site" evidence="1">
    <location>
        <position position="135"/>
    </location>
    <ligand>
        <name>Mg(2+)</name>
        <dbReference type="ChEBI" id="CHEBI:18420"/>
    </ligand>
</feature>
<feature type="binding site" description="via carbamate group" evidence="1">
    <location>
        <position position="136"/>
    </location>
    <ligand>
        <name>Mg(2+)</name>
        <dbReference type="ChEBI" id="CHEBI:18420"/>
    </ligand>
</feature>
<feature type="binding site" evidence="1">
    <location>
        <position position="211"/>
    </location>
    <ligand>
        <name>[2Fe-2S] cluster</name>
        <dbReference type="ChEBI" id="CHEBI:190135"/>
    </ligand>
</feature>
<feature type="binding site" evidence="1">
    <location>
        <position position="462"/>
    </location>
    <ligand>
        <name>Mg(2+)</name>
        <dbReference type="ChEBI" id="CHEBI:18420"/>
    </ligand>
</feature>
<feature type="modified residue" description="N6-carboxylysine" evidence="1">
    <location>
        <position position="136"/>
    </location>
</feature>
<name>ILVD_TROWT</name>
<gene>
    <name evidence="1" type="primary">ilvD</name>
    <name type="ordered locus">TWT_204</name>
</gene>
<reference key="1">
    <citation type="journal article" date="2003" name="Genome Res.">
        <title>Tropheryma whipplei twist: a human pathogenic Actinobacteria with a reduced genome.</title>
        <authorList>
            <person name="Raoult D."/>
            <person name="Ogata H."/>
            <person name="Audic S."/>
            <person name="Robert C."/>
            <person name="Suhre K."/>
            <person name="Drancourt M."/>
            <person name="Claverie J.-M."/>
        </authorList>
    </citation>
    <scope>NUCLEOTIDE SEQUENCE [LARGE SCALE GENOMIC DNA]</scope>
    <source>
        <strain>Twist</strain>
    </source>
</reference>
<organism>
    <name type="scientific">Tropheryma whipplei (strain Twist)</name>
    <name type="common">Whipple's bacillus</name>
    <dbReference type="NCBI Taxonomy" id="203267"/>
    <lineage>
        <taxon>Bacteria</taxon>
        <taxon>Bacillati</taxon>
        <taxon>Actinomycetota</taxon>
        <taxon>Actinomycetes</taxon>
        <taxon>Micrococcales</taxon>
        <taxon>Tropherymataceae</taxon>
        <taxon>Tropheryma</taxon>
    </lineage>
</organism>
<sequence length="569" mass="59694">MFMSSDANACEIDIKPRSRVVTHGIEATTSRGMLRAVGMGDADWEKPQIGIASSWNNITPCNLSLDRLAQGAREGVHAAGGYPLQFCTISVSDGISMGHEGMHFSLVSREVITDSVETVLMAEALDGVVLLAGCDKSLPGMLMAAARLDVSAVFLYAGSIAPGYVTLKCGESKEVTIIDSFEAVGAYKAGLIDQDDLGRIERAICPGEGACGGMYTANTMASVAEALGMSLLGSASPPSADRRRDVYAHKSGEAVVELLKRGITARDILTKEAFENAIAVVMALGGSTNAVLHLLAIAHEAHVPLTIDDFNKIGNRVPHIADLKPFGRYVMNDVDRVGGIPVVINALMREGFIHGDVITVSGRTMAEEISDINPGLPDGKVIHSFSSPLHPTGGIKVLKGTLAPDGAVAKTAGFDTVVFQGPAMVFDRERAAMDALSAGNIKKGSVIVIRYEGPKGGPGMREMLAITAAIKGSGLGKDVLLLTDGRFSGGTTGLCIGHIAPEAVDLGPIAFVQDGDIIRVDIEKSGIDVLVDEKQLRARHLTPPPPRYTSGVLSKYSKLVKSASLGAIT</sequence>
<protein>
    <recommendedName>
        <fullName evidence="1">Dihydroxy-acid dehydratase</fullName>
        <shortName evidence="1">DAD</shortName>
        <ecNumber evidence="1">4.2.1.9</ecNumber>
    </recommendedName>
</protein>
<proteinExistence type="inferred from homology"/>
<keyword id="KW-0001">2Fe-2S</keyword>
<keyword id="KW-0028">Amino-acid biosynthesis</keyword>
<keyword id="KW-0100">Branched-chain amino acid biosynthesis</keyword>
<keyword id="KW-0408">Iron</keyword>
<keyword id="KW-0411">Iron-sulfur</keyword>
<keyword id="KW-0456">Lyase</keyword>
<keyword id="KW-0460">Magnesium</keyword>
<keyword id="KW-0479">Metal-binding</keyword>
<keyword id="KW-1185">Reference proteome</keyword>
<accession>Q83GP9</accession>
<comment type="function">
    <text evidence="1">Functions in the biosynthesis of branched-chain amino acids. Catalyzes the dehydration of (2R,3R)-2,3-dihydroxy-3-methylpentanoate (2,3-dihydroxy-3-methylvalerate) into 2-oxo-3-methylpentanoate (2-oxo-3-methylvalerate) and of (2R)-2,3-dihydroxy-3-methylbutanoate (2,3-dihydroxyisovalerate) into 2-oxo-3-methylbutanoate (2-oxoisovalerate), the penultimate precursor to L-isoleucine and L-valine, respectively.</text>
</comment>
<comment type="catalytic activity">
    <reaction evidence="1">
        <text>(2R)-2,3-dihydroxy-3-methylbutanoate = 3-methyl-2-oxobutanoate + H2O</text>
        <dbReference type="Rhea" id="RHEA:24809"/>
        <dbReference type="ChEBI" id="CHEBI:11851"/>
        <dbReference type="ChEBI" id="CHEBI:15377"/>
        <dbReference type="ChEBI" id="CHEBI:49072"/>
        <dbReference type="EC" id="4.2.1.9"/>
    </reaction>
    <physiologicalReaction direction="left-to-right" evidence="1">
        <dbReference type="Rhea" id="RHEA:24810"/>
    </physiologicalReaction>
</comment>
<comment type="catalytic activity">
    <reaction evidence="1">
        <text>(2R,3R)-2,3-dihydroxy-3-methylpentanoate = (S)-3-methyl-2-oxopentanoate + H2O</text>
        <dbReference type="Rhea" id="RHEA:27694"/>
        <dbReference type="ChEBI" id="CHEBI:15377"/>
        <dbReference type="ChEBI" id="CHEBI:35146"/>
        <dbReference type="ChEBI" id="CHEBI:49258"/>
        <dbReference type="EC" id="4.2.1.9"/>
    </reaction>
    <physiologicalReaction direction="left-to-right" evidence="1">
        <dbReference type="Rhea" id="RHEA:27695"/>
    </physiologicalReaction>
</comment>
<comment type="cofactor">
    <cofactor evidence="1">
        <name>[2Fe-2S] cluster</name>
        <dbReference type="ChEBI" id="CHEBI:190135"/>
    </cofactor>
    <text evidence="1">Binds 1 [2Fe-2S] cluster per subunit. This cluster acts as a Lewis acid cofactor.</text>
</comment>
<comment type="cofactor">
    <cofactor evidence="1">
        <name>Mg(2+)</name>
        <dbReference type="ChEBI" id="CHEBI:18420"/>
    </cofactor>
</comment>
<comment type="pathway">
    <text evidence="1">Amino-acid biosynthesis; L-isoleucine biosynthesis; L-isoleucine from 2-oxobutanoate: step 3/4.</text>
</comment>
<comment type="pathway">
    <text evidence="1">Amino-acid biosynthesis; L-valine biosynthesis; L-valine from pyruvate: step 3/4.</text>
</comment>
<comment type="subunit">
    <text evidence="1">Homodimer.</text>
</comment>
<comment type="similarity">
    <text evidence="1">Belongs to the IlvD/Edd family.</text>
</comment>
<dbReference type="EC" id="4.2.1.9" evidence="1"/>
<dbReference type="EMBL" id="AE014184">
    <property type="protein sequence ID" value="AAO44301.1"/>
    <property type="molecule type" value="Genomic_DNA"/>
</dbReference>
<dbReference type="SMR" id="Q83GP9"/>
<dbReference type="STRING" id="203267.TWT_204"/>
<dbReference type="KEGG" id="twh:TWT_204"/>
<dbReference type="eggNOG" id="COG0129">
    <property type="taxonomic scope" value="Bacteria"/>
</dbReference>
<dbReference type="HOGENOM" id="CLU_014271_4_2_11"/>
<dbReference type="UniPathway" id="UPA00047">
    <property type="reaction ID" value="UER00057"/>
</dbReference>
<dbReference type="UniPathway" id="UPA00049">
    <property type="reaction ID" value="UER00061"/>
</dbReference>
<dbReference type="Proteomes" id="UP000002200">
    <property type="component" value="Chromosome"/>
</dbReference>
<dbReference type="GO" id="GO:0051537">
    <property type="term" value="F:2 iron, 2 sulfur cluster binding"/>
    <property type="evidence" value="ECO:0007669"/>
    <property type="project" value="UniProtKB-UniRule"/>
</dbReference>
<dbReference type="GO" id="GO:0004160">
    <property type="term" value="F:dihydroxy-acid dehydratase activity"/>
    <property type="evidence" value="ECO:0007669"/>
    <property type="project" value="UniProtKB-UniRule"/>
</dbReference>
<dbReference type="GO" id="GO:0000287">
    <property type="term" value="F:magnesium ion binding"/>
    <property type="evidence" value="ECO:0007669"/>
    <property type="project" value="UniProtKB-UniRule"/>
</dbReference>
<dbReference type="GO" id="GO:0009097">
    <property type="term" value="P:isoleucine biosynthetic process"/>
    <property type="evidence" value="ECO:0007669"/>
    <property type="project" value="UniProtKB-UniRule"/>
</dbReference>
<dbReference type="GO" id="GO:0009099">
    <property type="term" value="P:L-valine biosynthetic process"/>
    <property type="evidence" value="ECO:0007669"/>
    <property type="project" value="UniProtKB-UniRule"/>
</dbReference>
<dbReference type="FunFam" id="3.50.30.80:FF:000001">
    <property type="entry name" value="Dihydroxy-acid dehydratase"/>
    <property type="match status" value="1"/>
</dbReference>
<dbReference type="Gene3D" id="3.50.30.80">
    <property type="entry name" value="IlvD/EDD C-terminal domain-like"/>
    <property type="match status" value="1"/>
</dbReference>
<dbReference type="HAMAP" id="MF_00012">
    <property type="entry name" value="IlvD"/>
    <property type="match status" value="1"/>
</dbReference>
<dbReference type="InterPro" id="IPR050165">
    <property type="entry name" value="DHAD_IlvD/Edd"/>
</dbReference>
<dbReference type="InterPro" id="IPR042096">
    <property type="entry name" value="Dihydro-acid_dehy_C"/>
</dbReference>
<dbReference type="InterPro" id="IPR004404">
    <property type="entry name" value="DihydroxyA_deHydtase"/>
</dbReference>
<dbReference type="InterPro" id="IPR020558">
    <property type="entry name" value="DiOHA_6PGluconate_deHydtase_CS"/>
</dbReference>
<dbReference type="InterPro" id="IPR056740">
    <property type="entry name" value="ILV_EDD_C"/>
</dbReference>
<dbReference type="InterPro" id="IPR000581">
    <property type="entry name" value="ILV_EDD_N"/>
</dbReference>
<dbReference type="InterPro" id="IPR037237">
    <property type="entry name" value="IlvD/EDD_N"/>
</dbReference>
<dbReference type="NCBIfam" id="TIGR00110">
    <property type="entry name" value="ilvD"/>
    <property type="match status" value="1"/>
</dbReference>
<dbReference type="NCBIfam" id="NF002068">
    <property type="entry name" value="PRK00911.1"/>
    <property type="match status" value="1"/>
</dbReference>
<dbReference type="PANTHER" id="PTHR21000">
    <property type="entry name" value="DIHYDROXY-ACID DEHYDRATASE DAD"/>
    <property type="match status" value="1"/>
</dbReference>
<dbReference type="PANTHER" id="PTHR21000:SF5">
    <property type="entry name" value="DIHYDROXY-ACID DEHYDRATASE, MITOCHONDRIAL"/>
    <property type="match status" value="1"/>
</dbReference>
<dbReference type="Pfam" id="PF24877">
    <property type="entry name" value="ILV_EDD_C"/>
    <property type="match status" value="1"/>
</dbReference>
<dbReference type="Pfam" id="PF00920">
    <property type="entry name" value="ILVD_EDD_N"/>
    <property type="match status" value="1"/>
</dbReference>
<dbReference type="SUPFAM" id="SSF143975">
    <property type="entry name" value="IlvD/EDD N-terminal domain-like"/>
    <property type="match status" value="1"/>
</dbReference>
<dbReference type="SUPFAM" id="SSF52016">
    <property type="entry name" value="LeuD/IlvD-like"/>
    <property type="match status" value="1"/>
</dbReference>
<dbReference type="PROSITE" id="PS00886">
    <property type="entry name" value="ILVD_EDD_1"/>
    <property type="match status" value="1"/>
</dbReference>
<dbReference type="PROSITE" id="PS00887">
    <property type="entry name" value="ILVD_EDD_2"/>
    <property type="match status" value="1"/>
</dbReference>